<sequence>MTESTFPQYPRLVLSKGREKSLLRRHPWVFSGAVSRLEGKANLGETIDIVDHQGKWLARGAWSPASQIRARVWTFDKAESIDIAFFTRRLRQAQQWRDWLAKKDGLDSYRLIAGESDGLPGVTIDRFGHFLVLQLLSAGAEYQRAALISALQTCYPDCAIYDRSDVAVRKKEGMALTQGPVTGELPPALLPIEEHGMKLLVDIQGGHKTGYYLDQRDSRLATRRYVENQRVLNCFSYTGGFAVSALMGGCRQVVSVDTSQDALDIARQNVELNQLDLSKAEFVRDDVFKLLRAYREHGEKFDVIIMDPPKFVENKSQLMGACRGYKDINMLAIQLLNPGGILLTFSCSGLMTSDLFQKIIADAAIDAGRDVQFIEQFRQAADHPVIATYPEGLYLKGFACRVM</sequence>
<name>RLMI_SALTY</name>
<reference key="1">
    <citation type="journal article" date="2001" name="Nature">
        <title>Complete genome sequence of Salmonella enterica serovar Typhimurium LT2.</title>
        <authorList>
            <person name="McClelland M."/>
            <person name="Sanderson K.E."/>
            <person name="Spieth J."/>
            <person name="Clifton S.W."/>
            <person name="Latreille P."/>
            <person name="Courtney L."/>
            <person name="Porwollik S."/>
            <person name="Ali J."/>
            <person name="Dante M."/>
            <person name="Du F."/>
            <person name="Hou S."/>
            <person name="Layman D."/>
            <person name="Leonard S."/>
            <person name="Nguyen C."/>
            <person name="Scott K."/>
            <person name="Holmes A."/>
            <person name="Grewal N."/>
            <person name="Mulvaney E."/>
            <person name="Ryan E."/>
            <person name="Sun H."/>
            <person name="Florea L."/>
            <person name="Miller W."/>
            <person name="Stoneking T."/>
            <person name="Nhan M."/>
            <person name="Waterston R."/>
            <person name="Wilson R.K."/>
        </authorList>
    </citation>
    <scope>NUCLEOTIDE SEQUENCE [LARGE SCALE GENOMIC DNA]</scope>
    <source>
        <strain>LT2 / SGSC1412 / ATCC 700720</strain>
    </source>
</reference>
<organism>
    <name type="scientific">Salmonella typhimurium (strain LT2 / SGSC1412 / ATCC 700720)</name>
    <dbReference type="NCBI Taxonomy" id="99287"/>
    <lineage>
        <taxon>Bacteria</taxon>
        <taxon>Pseudomonadati</taxon>
        <taxon>Pseudomonadota</taxon>
        <taxon>Gammaproteobacteria</taxon>
        <taxon>Enterobacterales</taxon>
        <taxon>Enterobacteriaceae</taxon>
        <taxon>Salmonella</taxon>
    </lineage>
</organism>
<accession>Q8ZQ64</accession>
<gene>
    <name evidence="1" type="primary">rlmI</name>
    <name type="ordered locus">STM1080</name>
</gene>
<comment type="function">
    <text evidence="1">Specifically methylates the cytosine at position 1962 (m5C1962) of 23S rRNA.</text>
</comment>
<comment type="catalytic activity">
    <reaction evidence="1">
        <text>cytidine(1962) in 23S rRNA + S-adenosyl-L-methionine = 5-methylcytidine(1962) in 23S rRNA + S-adenosyl-L-homocysteine + H(+)</text>
        <dbReference type="Rhea" id="RHEA:42912"/>
        <dbReference type="Rhea" id="RHEA-COMP:10382"/>
        <dbReference type="Rhea" id="RHEA-COMP:10386"/>
        <dbReference type="ChEBI" id="CHEBI:15378"/>
        <dbReference type="ChEBI" id="CHEBI:57856"/>
        <dbReference type="ChEBI" id="CHEBI:59789"/>
        <dbReference type="ChEBI" id="CHEBI:74483"/>
        <dbReference type="ChEBI" id="CHEBI:82748"/>
        <dbReference type="EC" id="2.1.1.191"/>
    </reaction>
</comment>
<comment type="subcellular location">
    <subcellularLocation>
        <location evidence="1">Cytoplasm</location>
    </subcellularLocation>
</comment>
<comment type="similarity">
    <text evidence="1">Belongs to the methyltransferase superfamily. RlmI family.</text>
</comment>
<dbReference type="EC" id="2.1.1.191" evidence="1"/>
<dbReference type="EMBL" id="AE006468">
    <property type="protein sequence ID" value="AAL20013.1"/>
    <property type="molecule type" value="Genomic_DNA"/>
</dbReference>
<dbReference type="RefSeq" id="WP_000140480.1">
    <property type="nucleotide sequence ID" value="NC_003197.2"/>
</dbReference>
<dbReference type="SMR" id="Q8ZQ64"/>
<dbReference type="STRING" id="99287.STM1080"/>
<dbReference type="PaxDb" id="99287-STM1080"/>
<dbReference type="KEGG" id="stm:STM1080"/>
<dbReference type="PATRIC" id="fig|99287.12.peg.1145"/>
<dbReference type="HOGENOM" id="CLU_014042_0_0_6"/>
<dbReference type="PhylomeDB" id="Q8ZQ64"/>
<dbReference type="BioCyc" id="SENT99287:STM1080-MONOMER"/>
<dbReference type="Proteomes" id="UP000001014">
    <property type="component" value="Chromosome"/>
</dbReference>
<dbReference type="GO" id="GO:0005737">
    <property type="term" value="C:cytoplasm"/>
    <property type="evidence" value="ECO:0007669"/>
    <property type="project" value="UniProtKB-SubCell"/>
</dbReference>
<dbReference type="GO" id="GO:0003723">
    <property type="term" value="F:RNA binding"/>
    <property type="evidence" value="ECO:0007669"/>
    <property type="project" value="UniProtKB-KW"/>
</dbReference>
<dbReference type="GO" id="GO:0016434">
    <property type="term" value="F:rRNA (cytosine) methyltransferase activity"/>
    <property type="evidence" value="ECO:0007669"/>
    <property type="project" value="UniProtKB-UniRule"/>
</dbReference>
<dbReference type="CDD" id="cd02440">
    <property type="entry name" value="AdoMet_MTases"/>
    <property type="match status" value="1"/>
</dbReference>
<dbReference type="CDD" id="cd21153">
    <property type="entry name" value="PUA_RlmI"/>
    <property type="match status" value="1"/>
</dbReference>
<dbReference type="CDD" id="cd11572">
    <property type="entry name" value="RlmI_M_like"/>
    <property type="match status" value="1"/>
</dbReference>
<dbReference type="FunFam" id="3.40.50.150:FF:000044">
    <property type="entry name" value="Ribosomal RNA large subunit methyltransferase I"/>
    <property type="match status" value="1"/>
</dbReference>
<dbReference type="Gene3D" id="2.30.130.10">
    <property type="entry name" value="PUA domain"/>
    <property type="match status" value="1"/>
</dbReference>
<dbReference type="Gene3D" id="3.30.750.80">
    <property type="entry name" value="RNA methyltransferase domain (HRMD) like"/>
    <property type="match status" value="1"/>
</dbReference>
<dbReference type="Gene3D" id="3.40.50.150">
    <property type="entry name" value="Vaccinia Virus protein VP39"/>
    <property type="match status" value="1"/>
</dbReference>
<dbReference type="HAMAP" id="MF_01857">
    <property type="entry name" value="23SrRNA_methyltr_I"/>
    <property type="match status" value="1"/>
</dbReference>
<dbReference type="InterPro" id="IPR002478">
    <property type="entry name" value="PUA"/>
</dbReference>
<dbReference type="InterPro" id="IPR015947">
    <property type="entry name" value="PUA-like_sf"/>
</dbReference>
<dbReference type="InterPro" id="IPR036974">
    <property type="entry name" value="PUA_sf"/>
</dbReference>
<dbReference type="InterPro" id="IPR023542">
    <property type="entry name" value="RLMI"/>
</dbReference>
<dbReference type="InterPro" id="IPR041532">
    <property type="entry name" value="RlmI-like_PUA"/>
</dbReference>
<dbReference type="InterPro" id="IPR019614">
    <property type="entry name" value="SAM-dep_methyl-trfase"/>
</dbReference>
<dbReference type="InterPro" id="IPR029063">
    <property type="entry name" value="SAM-dependent_MTases_sf"/>
</dbReference>
<dbReference type="NCBIfam" id="NF011707">
    <property type="entry name" value="PRK15128.1"/>
    <property type="match status" value="1"/>
</dbReference>
<dbReference type="PANTHER" id="PTHR42873">
    <property type="entry name" value="RIBOSOMAL RNA LARGE SUBUNIT METHYLTRANSFERASE"/>
    <property type="match status" value="1"/>
</dbReference>
<dbReference type="PANTHER" id="PTHR42873:SF1">
    <property type="entry name" value="S-ADENOSYLMETHIONINE-DEPENDENT METHYLTRANSFERASE DOMAIN-CONTAINING PROTEIN"/>
    <property type="match status" value="1"/>
</dbReference>
<dbReference type="Pfam" id="PF10672">
    <property type="entry name" value="Methyltrans_SAM"/>
    <property type="match status" value="1"/>
</dbReference>
<dbReference type="Pfam" id="PF17785">
    <property type="entry name" value="PUA_3"/>
    <property type="match status" value="1"/>
</dbReference>
<dbReference type="SMART" id="SM00359">
    <property type="entry name" value="PUA"/>
    <property type="match status" value="1"/>
</dbReference>
<dbReference type="SUPFAM" id="SSF88697">
    <property type="entry name" value="PUA domain-like"/>
    <property type="match status" value="1"/>
</dbReference>
<dbReference type="SUPFAM" id="SSF53335">
    <property type="entry name" value="S-adenosyl-L-methionine-dependent methyltransferases"/>
    <property type="match status" value="1"/>
</dbReference>
<dbReference type="PROSITE" id="PS50890">
    <property type="entry name" value="PUA"/>
    <property type="match status" value="1"/>
</dbReference>
<proteinExistence type="inferred from homology"/>
<protein>
    <recommendedName>
        <fullName evidence="1">Ribosomal RNA large subunit methyltransferase I</fullName>
        <ecNumber evidence="1">2.1.1.191</ecNumber>
    </recommendedName>
    <alternativeName>
        <fullName evidence="1">23S rRNA m5C1962 methyltransferase</fullName>
    </alternativeName>
    <alternativeName>
        <fullName evidence="1">rRNA (cytosine-C(5)-)-methyltransferase RlmI</fullName>
    </alternativeName>
</protein>
<keyword id="KW-0963">Cytoplasm</keyword>
<keyword id="KW-0489">Methyltransferase</keyword>
<keyword id="KW-1185">Reference proteome</keyword>
<keyword id="KW-0694">RNA-binding</keyword>
<keyword id="KW-0698">rRNA processing</keyword>
<keyword id="KW-0949">S-adenosyl-L-methionine</keyword>
<keyword id="KW-0808">Transferase</keyword>
<evidence type="ECO:0000255" key="1">
    <source>
        <dbReference type="HAMAP-Rule" id="MF_01857"/>
    </source>
</evidence>
<feature type="chain" id="PRO_0000366252" description="Ribosomal RNA large subunit methyltransferase I">
    <location>
        <begin position="1"/>
        <end position="403"/>
    </location>
</feature>
<feature type="domain" description="PUA" evidence="1">
    <location>
        <begin position="9"/>
        <end position="88"/>
    </location>
</feature>